<comment type="function">
    <text evidence="1">CRISPR (clustered regularly interspaced short palindromic repeat) is an adaptive immune system that provides protection against mobile genetic elements (viruses, transposable elements and conjugative plasmids). CRISPR clusters contain spacers, sequences complementary to antecedent mobile elements, and target invading nucleic acids. CRISPR clusters are transcribed and processed into CRISPR RNA (crRNA) (By similarity).</text>
</comment>
<comment type="subunit">
    <text evidence="2">Part of the aCascade ribonucleoprotein complex, minimally composed of Csa2 and Cas5a, which binds crRNA. Other possible components of aCascade in strain P1 are Cas6b (SSO1437) and Csa5 (SSO1443), while SSO1399, Cas5b (SSO1400) and SSO1401 have sometimes been seen weakly associated. Csa2 is probably the major RNA-binding subunit. The Csa2-Cas5a-crRNA complex also binds target DNA homologous to crRNA, probably forming an R-loop. Purified aCascade forms a filament about 6 nm in width.</text>
</comment>
<comment type="miscellaneous">
    <text>Cloning was done with strain P2, while interaction experiments were done with genes cloned from strain P2 but over-expressed in P1. The aCascade complex was purified from strain P1.</text>
</comment>
<comment type="similarity">
    <text evidence="3">Belongs to the CRISPR-associated protein Cas5 family. Subtype I-A/Apern subfamily.</text>
</comment>
<sequence length="240" mass="27397">MIYSKVFLKLHWGFSVVKPLAAKAKPGFYLPPPTTLIGALSYGKFRGVDNINLGNVYGSPAYNFRNIMATARLESEGVYTEDIIRNVISYFQRKERRENPRYIYGVIPTGKVYIPNGRLVVVYVTDSISKEELEKLCWSITRIGCKECLASVENVEVGEAKKVSGRVKTRYYFRDTVKVVGRKEFLEYVTFWEENGYIWGKEGSPVRYILPITTYPLASKEVEVEAKEAYEVGGEYVVFS</sequence>
<accession>Q97Y92</accession>
<evidence type="ECO:0000250" key="1"/>
<evidence type="ECO:0000269" key="2">
    <source>
    </source>
</evidence>
<evidence type="ECO:0000305" key="3"/>
<gene>
    <name type="primary">cas5a</name>
    <name type="ordered locus">SSO1441</name>
</gene>
<reference key="1">
    <citation type="journal article" date="2001" name="Proc. Natl. Acad. Sci. U.S.A.">
        <title>The complete genome of the crenarchaeon Sulfolobus solfataricus P2.</title>
        <authorList>
            <person name="She Q."/>
            <person name="Singh R.K."/>
            <person name="Confalonieri F."/>
            <person name="Zivanovic Y."/>
            <person name="Allard G."/>
            <person name="Awayez M.J."/>
            <person name="Chan-Weiher C.C.-Y."/>
            <person name="Clausen I.G."/>
            <person name="Curtis B.A."/>
            <person name="De Moors A."/>
            <person name="Erauso G."/>
            <person name="Fletcher C."/>
            <person name="Gordon P.M.K."/>
            <person name="Heikamp-de Jong I."/>
            <person name="Jeffries A.C."/>
            <person name="Kozera C.J."/>
            <person name="Medina N."/>
            <person name="Peng X."/>
            <person name="Thi-Ngoc H.P."/>
            <person name="Redder P."/>
            <person name="Schenk M.E."/>
            <person name="Theriault C."/>
            <person name="Tolstrup N."/>
            <person name="Charlebois R.L."/>
            <person name="Doolittle W.F."/>
            <person name="Duguet M."/>
            <person name="Gaasterland T."/>
            <person name="Garrett R.A."/>
            <person name="Ragan M.A."/>
            <person name="Sensen C.W."/>
            <person name="Van der Oost J."/>
        </authorList>
    </citation>
    <scope>NUCLEOTIDE SEQUENCE [LARGE SCALE GENOMIC DNA]</scope>
    <source>
        <strain>ATCC 35092 / DSM 1617 / JCM 11322 / P2</strain>
    </source>
</reference>
<reference key="2">
    <citation type="journal article" date="2011" name="J. Biol. Chem.">
        <title>Structural and functional characterization of an archaeal clustered regularly interspaced short palindromic repeat (CRISPR)-associated complex for antiviral defense (CASCADE).</title>
        <authorList>
            <person name="Lintner N.G."/>
            <person name="Kerou M."/>
            <person name="Brumfield S.K."/>
            <person name="Graham S."/>
            <person name="Liu H."/>
            <person name="Naismith J.H."/>
            <person name="Sdano M."/>
            <person name="Peng N."/>
            <person name="She Q."/>
            <person name="Copie V."/>
            <person name="Young M.J."/>
            <person name="White M.F."/>
            <person name="Lawrence C.M."/>
        </authorList>
    </citation>
    <scope>IDENTIFICATION BY MASS SPECTROMETRY</scope>
    <scope>SUBUNIT</scope>
    <scope>INTERACTION WITH CSA2</scope>
    <source>
        <strain>ATCC 35091 / DSM 1616 / JCM 8930 / NBRC 15331 / P1</strain>
        <strain>ATCC 35092 / DSM 1617 / JCM 11322 / P2</strain>
    </source>
</reference>
<feature type="chain" id="PRO_0000417892" description="CRISPR system aCascade subunit Cas5 1">
    <location>
        <begin position="1"/>
        <end position="240"/>
    </location>
</feature>
<organism>
    <name type="scientific">Saccharolobus solfataricus (strain ATCC 35092 / DSM 1617 / JCM 11322 / P2)</name>
    <name type="common">Sulfolobus solfataricus</name>
    <dbReference type="NCBI Taxonomy" id="273057"/>
    <lineage>
        <taxon>Archaea</taxon>
        <taxon>Thermoproteota</taxon>
        <taxon>Thermoprotei</taxon>
        <taxon>Sulfolobales</taxon>
        <taxon>Sulfolobaceae</taxon>
        <taxon>Saccharolobus</taxon>
    </lineage>
</organism>
<protein>
    <recommendedName>
        <fullName>CRISPR system aCascade subunit Cas5 1</fullName>
    </recommendedName>
</protein>
<name>CAS5A_SACS2</name>
<proteinExistence type="evidence at protein level"/>
<keyword id="KW-0051">Antiviral defense</keyword>
<keyword id="KW-1185">Reference proteome</keyword>
<keyword id="KW-0694">RNA-binding</keyword>
<dbReference type="EMBL" id="AE006641">
    <property type="protein sequence ID" value="AAK41674.1"/>
    <property type="molecule type" value="Genomic_DNA"/>
</dbReference>
<dbReference type="PIR" id="C90302">
    <property type="entry name" value="C90302"/>
</dbReference>
<dbReference type="RefSeq" id="WP_010923406.1">
    <property type="nucleotide sequence ID" value="NC_002754.1"/>
</dbReference>
<dbReference type="SMR" id="Q97Y92"/>
<dbReference type="STRING" id="273057.SSO1441"/>
<dbReference type="PaxDb" id="273057-SSO1441"/>
<dbReference type="EnsemblBacteria" id="AAK41674">
    <property type="protein sequence ID" value="AAK41674"/>
    <property type="gene ID" value="SSO1441"/>
</dbReference>
<dbReference type="GeneID" id="1454453"/>
<dbReference type="GeneID" id="27427809"/>
<dbReference type="KEGG" id="sso:SSO1441"/>
<dbReference type="PATRIC" id="fig|273057.12.peg.1470"/>
<dbReference type="eggNOG" id="arCOG02670">
    <property type="taxonomic scope" value="Archaea"/>
</dbReference>
<dbReference type="HOGENOM" id="CLU_1154391_0_0_2"/>
<dbReference type="InParanoid" id="Q97Y92"/>
<dbReference type="Proteomes" id="UP000001974">
    <property type="component" value="Chromosome"/>
</dbReference>
<dbReference type="GO" id="GO:0003723">
    <property type="term" value="F:RNA binding"/>
    <property type="evidence" value="ECO:0007669"/>
    <property type="project" value="UniProtKB-KW"/>
</dbReference>
<dbReference type="GO" id="GO:0051607">
    <property type="term" value="P:defense response to virus"/>
    <property type="evidence" value="ECO:0007669"/>
    <property type="project" value="UniProtKB-KW"/>
</dbReference>
<dbReference type="CDD" id="cd09753">
    <property type="entry name" value="Cas5_I-A"/>
    <property type="match status" value="1"/>
</dbReference>
<dbReference type="Gene3D" id="3.30.70.3120">
    <property type="match status" value="1"/>
</dbReference>
<dbReference type="InterPro" id="IPR013422">
    <property type="entry name" value="CRISPR-assoc_prot_Cas5_N"/>
</dbReference>
<dbReference type="InterPro" id="IPR010153">
    <property type="entry name" value="CRISPR-assoc_prot_Cas5a-typ"/>
</dbReference>
<dbReference type="InterPro" id="IPR053725">
    <property type="entry name" value="CRISPR_Cas5_sf"/>
</dbReference>
<dbReference type="NCBIfam" id="TIGR01874">
    <property type="entry name" value="cas_cas5a"/>
    <property type="match status" value="1"/>
</dbReference>
<dbReference type="NCBIfam" id="TIGR02593">
    <property type="entry name" value="CRISPR_cas5"/>
    <property type="match status" value="1"/>
</dbReference>